<organism>
    <name type="scientific">Pelobacter propionicus (strain DSM 2379 / NBRC 103807 / OttBd1)</name>
    <dbReference type="NCBI Taxonomy" id="338966"/>
    <lineage>
        <taxon>Bacteria</taxon>
        <taxon>Pseudomonadati</taxon>
        <taxon>Thermodesulfobacteriota</taxon>
        <taxon>Desulfuromonadia</taxon>
        <taxon>Desulfuromonadales</taxon>
        <taxon>Desulfuromonadaceae</taxon>
        <taxon>Pelobacter</taxon>
    </lineage>
</organism>
<evidence type="ECO:0000250" key="1"/>
<evidence type="ECO:0000305" key="2"/>
<keyword id="KW-0963">Cytoplasm</keyword>
<keyword id="KW-0285">Flavoprotein</keyword>
<keyword id="KW-0288">FMN</keyword>
<keyword id="KW-0520">NAD</keyword>
<keyword id="KW-0560">Oxidoreductase</keyword>
<keyword id="KW-0665">Pyrimidine biosynthesis</keyword>
<keyword id="KW-1185">Reference proteome</keyword>
<dbReference type="EC" id="1.3.1.14"/>
<dbReference type="EMBL" id="CP000482">
    <property type="protein sequence ID" value="ABL00234.1"/>
    <property type="molecule type" value="Genomic_DNA"/>
</dbReference>
<dbReference type="RefSeq" id="WP_011736486.1">
    <property type="nucleotide sequence ID" value="NC_008609.1"/>
</dbReference>
<dbReference type="SMR" id="A1ASB3"/>
<dbReference type="STRING" id="338966.Ppro_2629"/>
<dbReference type="KEGG" id="ppd:Ppro_2629"/>
<dbReference type="eggNOG" id="COG0167">
    <property type="taxonomic scope" value="Bacteria"/>
</dbReference>
<dbReference type="HOGENOM" id="CLU_042042_0_0_7"/>
<dbReference type="OrthoDB" id="9802377at2"/>
<dbReference type="UniPathway" id="UPA00070">
    <property type="reaction ID" value="UER00945"/>
</dbReference>
<dbReference type="Proteomes" id="UP000006732">
    <property type="component" value="Chromosome"/>
</dbReference>
<dbReference type="GO" id="GO:0005737">
    <property type="term" value="C:cytoplasm"/>
    <property type="evidence" value="ECO:0007669"/>
    <property type="project" value="UniProtKB-SubCell"/>
</dbReference>
<dbReference type="GO" id="GO:0004589">
    <property type="term" value="F:dihydroorotate dehydrogenase (NAD+) activity"/>
    <property type="evidence" value="ECO:0007669"/>
    <property type="project" value="UniProtKB-EC"/>
</dbReference>
<dbReference type="GO" id="GO:0006207">
    <property type="term" value="P:'de novo' pyrimidine nucleobase biosynthetic process"/>
    <property type="evidence" value="ECO:0007669"/>
    <property type="project" value="InterPro"/>
</dbReference>
<dbReference type="GO" id="GO:0044205">
    <property type="term" value="P:'de novo' UMP biosynthetic process"/>
    <property type="evidence" value="ECO:0007669"/>
    <property type="project" value="UniProtKB-UniRule"/>
</dbReference>
<dbReference type="CDD" id="cd04740">
    <property type="entry name" value="DHOD_1B_like"/>
    <property type="match status" value="1"/>
</dbReference>
<dbReference type="FunFam" id="3.20.20.70:FF:000027">
    <property type="entry name" value="Dihydropyrimidine dehydrogenase [NADP(+)]"/>
    <property type="match status" value="1"/>
</dbReference>
<dbReference type="Gene3D" id="3.20.20.70">
    <property type="entry name" value="Aldolase class I"/>
    <property type="match status" value="1"/>
</dbReference>
<dbReference type="HAMAP" id="MF_00224">
    <property type="entry name" value="DHO_dh_type1"/>
    <property type="match status" value="1"/>
</dbReference>
<dbReference type="InterPro" id="IPR013785">
    <property type="entry name" value="Aldolase_TIM"/>
</dbReference>
<dbReference type="InterPro" id="IPR050074">
    <property type="entry name" value="DHO_dehydrogenase"/>
</dbReference>
<dbReference type="InterPro" id="IPR033888">
    <property type="entry name" value="DHOD_1B"/>
</dbReference>
<dbReference type="InterPro" id="IPR024920">
    <property type="entry name" value="Dihydroorotate_DH_1"/>
</dbReference>
<dbReference type="InterPro" id="IPR012135">
    <property type="entry name" value="Dihydroorotate_DH_1_2"/>
</dbReference>
<dbReference type="InterPro" id="IPR005720">
    <property type="entry name" value="Dihydroorotate_DH_cat"/>
</dbReference>
<dbReference type="InterPro" id="IPR001295">
    <property type="entry name" value="Dihydroorotate_DH_CS"/>
</dbReference>
<dbReference type="InterPro" id="IPR049622">
    <property type="entry name" value="Dihydroorotate_DH_I"/>
</dbReference>
<dbReference type="NCBIfam" id="NF005574">
    <property type="entry name" value="PRK07259.1"/>
    <property type="match status" value="1"/>
</dbReference>
<dbReference type="NCBIfam" id="TIGR01037">
    <property type="entry name" value="pyrD_sub1_fam"/>
    <property type="match status" value="1"/>
</dbReference>
<dbReference type="PANTHER" id="PTHR48109:SF1">
    <property type="entry name" value="DIHYDROOROTATE DEHYDROGENASE (FUMARATE)"/>
    <property type="match status" value="1"/>
</dbReference>
<dbReference type="PANTHER" id="PTHR48109">
    <property type="entry name" value="DIHYDROOROTATE DEHYDROGENASE (QUINONE), MITOCHONDRIAL-RELATED"/>
    <property type="match status" value="1"/>
</dbReference>
<dbReference type="Pfam" id="PF01180">
    <property type="entry name" value="DHO_dh"/>
    <property type="match status" value="1"/>
</dbReference>
<dbReference type="PIRSF" id="PIRSF000164">
    <property type="entry name" value="DHO_oxidase"/>
    <property type="match status" value="1"/>
</dbReference>
<dbReference type="SUPFAM" id="SSF51395">
    <property type="entry name" value="FMN-linked oxidoreductases"/>
    <property type="match status" value="1"/>
</dbReference>
<dbReference type="PROSITE" id="PS00911">
    <property type="entry name" value="DHODEHASE_1"/>
    <property type="match status" value="1"/>
</dbReference>
<dbReference type="PROSITE" id="PS00912">
    <property type="entry name" value="DHODEHASE_2"/>
    <property type="match status" value="1"/>
</dbReference>
<feature type="chain" id="PRO_0000336451" description="Dihydroorotate dehydrogenase B (NAD(+)), catalytic subunit">
    <location>
        <begin position="1"/>
        <end position="304"/>
    </location>
</feature>
<feature type="active site" description="Nucleophile">
    <location>
        <position position="131"/>
    </location>
</feature>
<feature type="binding site" evidence="1">
    <location>
        <position position="22"/>
    </location>
    <ligand>
        <name>FMN</name>
        <dbReference type="ChEBI" id="CHEBI:58210"/>
    </ligand>
</feature>
<feature type="binding site" evidence="1">
    <location>
        <begin position="46"/>
        <end position="47"/>
    </location>
    <ligand>
        <name>FMN</name>
        <dbReference type="ChEBI" id="CHEBI:58210"/>
    </ligand>
</feature>
<feature type="binding site" evidence="1">
    <location>
        <position position="46"/>
    </location>
    <ligand>
        <name>substrate</name>
    </ligand>
</feature>
<feature type="binding site" evidence="1">
    <location>
        <begin position="70"/>
        <end position="74"/>
    </location>
    <ligand>
        <name>substrate</name>
    </ligand>
</feature>
<feature type="binding site" evidence="1">
    <location>
        <position position="100"/>
    </location>
    <ligand>
        <name>FMN</name>
        <dbReference type="ChEBI" id="CHEBI:58210"/>
    </ligand>
</feature>
<feature type="binding site" evidence="1">
    <location>
        <position position="128"/>
    </location>
    <ligand>
        <name>FMN</name>
        <dbReference type="ChEBI" id="CHEBI:58210"/>
    </ligand>
</feature>
<feature type="binding site" evidence="1">
    <location>
        <position position="128"/>
    </location>
    <ligand>
        <name>substrate</name>
    </ligand>
</feature>
<feature type="binding site" evidence="1">
    <location>
        <position position="166"/>
    </location>
    <ligand>
        <name>FMN</name>
        <dbReference type="ChEBI" id="CHEBI:58210"/>
    </ligand>
</feature>
<feature type="binding site" evidence="1">
    <location>
        <position position="192"/>
    </location>
    <ligand>
        <name>FMN</name>
        <dbReference type="ChEBI" id="CHEBI:58210"/>
    </ligand>
</feature>
<feature type="binding site" evidence="1">
    <location>
        <begin position="193"/>
        <end position="194"/>
    </location>
    <ligand>
        <name>substrate</name>
    </ligand>
</feature>
<feature type="binding site" evidence="1">
    <location>
        <position position="218"/>
    </location>
    <ligand>
        <name>FMN</name>
        <dbReference type="ChEBI" id="CHEBI:58210"/>
    </ligand>
</feature>
<feature type="binding site" evidence="1">
    <location>
        <begin position="244"/>
        <end position="245"/>
    </location>
    <ligand>
        <name>FMN</name>
        <dbReference type="ChEBI" id="CHEBI:58210"/>
    </ligand>
</feature>
<feature type="binding site" evidence="1">
    <location>
        <begin position="266"/>
        <end position="267"/>
    </location>
    <ligand>
        <name>FMN</name>
        <dbReference type="ChEBI" id="CHEBI:58210"/>
    </ligand>
</feature>
<proteinExistence type="inferred from homology"/>
<protein>
    <recommendedName>
        <fullName>Dihydroorotate dehydrogenase B (NAD(+)), catalytic subunit</fullName>
        <shortName>DHOD B</shortName>
        <shortName>DHODase B</shortName>
        <shortName>DHOdehase B</shortName>
        <ecNumber>1.3.1.14</ecNumber>
    </recommendedName>
    <alternativeName>
        <fullName>Dihydroorotate oxidase B</fullName>
    </alternativeName>
    <alternativeName>
        <fullName>Orotate reductase (NADH)</fullName>
    </alternativeName>
</protein>
<name>PYRDB_PELPD</name>
<sequence>MKPDMTVNLAGLELRNPVMTASGTFGYGREFADYVDLEKIGAFVTKGLSLKPRPGNPTPRIVETPGGMLNAIGLQNVGIEAFIAEKVPFLARVNTPAIVNFFGSTPEEYAELAGRLDEIPQVAGLEVNISCPNVKQGGIVFGTDPACAGQVVAACRRATKKPLIVKLSPNVTDVVVMAQACADAGADALSLINTLTGMAIDLKSRKPVLANITGGLSGPAIKPVALRMVWQVSRAVQVPLIGIGGITSATDALEFILAGASAVQVGTASFITPSASQEIAQGMERWLEEHGVARVSDLVGALEC</sequence>
<comment type="function">
    <text evidence="1">Catalyzes the conversion of dihydroorotate to orotate with NAD(+) as electron acceptor.</text>
</comment>
<comment type="catalytic activity">
    <reaction>
        <text>(S)-dihydroorotate + NAD(+) = orotate + NADH + H(+)</text>
        <dbReference type="Rhea" id="RHEA:13513"/>
        <dbReference type="ChEBI" id="CHEBI:15378"/>
        <dbReference type="ChEBI" id="CHEBI:30839"/>
        <dbReference type="ChEBI" id="CHEBI:30864"/>
        <dbReference type="ChEBI" id="CHEBI:57540"/>
        <dbReference type="ChEBI" id="CHEBI:57945"/>
        <dbReference type="EC" id="1.3.1.14"/>
    </reaction>
</comment>
<comment type="cofactor">
    <cofactor evidence="1">
        <name>FMN</name>
        <dbReference type="ChEBI" id="CHEBI:58210"/>
    </cofactor>
    <text evidence="1">Binds 1 FMN per subunit.</text>
</comment>
<comment type="pathway">
    <text>Pyrimidine metabolism; UMP biosynthesis via de novo pathway; orotate from (S)-dihydroorotate (NAD(+) route): step 1/1.</text>
</comment>
<comment type="subunit">
    <text evidence="1">Heterotetramer of 2 PyrK and 2 PyrD type B subunits.</text>
</comment>
<comment type="subcellular location">
    <subcellularLocation>
        <location evidence="1">Cytoplasm</location>
    </subcellularLocation>
</comment>
<comment type="similarity">
    <text evidence="2">Belongs to the dihydroorotate dehydrogenase family. Type 1 subfamily.</text>
</comment>
<gene>
    <name type="primary">pyrD</name>
    <name type="ordered locus">Ppro_2629</name>
</gene>
<reference key="1">
    <citation type="submission" date="2006-10" db="EMBL/GenBank/DDBJ databases">
        <title>Complete sequence of chromosome of Pelobacter propionicus DSM 2379.</title>
        <authorList>
            <consortium name="US DOE Joint Genome Institute"/>
            <person name="Copeland A."/>
            <person name="Lucas S."/>
            <person name="Lapidus A."/>
            <person name="Barry K."/>
            <person name="Detter J.C."/>
            <person name="Glavina del Rio T."/>
            <person name="Hammon N."/>
            <person name="Israni S."/>
            <person name="Dalin E."/>
            <person name="Tice H."/>
            <person name="Pitluck S."/>
            <person name="Saunders E."/>
            <person name="Brettin T."/>
            <person name="Bruce D."/>
            <person name="Han C."/>
            <person name="Tapia R."/>
            <person name="Schmutz J."/>
            <person name="Larimer F."/>
            <person name="Land M."/>
            <person name="Hauser L."/>
            <person name="Kyrpides N."/>
            <person name="Kim E."/>
            <person name="Lovley D."/>
            <person name="Richardson P."/>
        </authorList>
    </citation>
    <scope>NUCLEOTIDE SEQUENCE [LARGE SCALE GENOMIC DNA]</scope>
    <source>
        <strain>DSM 2379 / NBRC 103807 / OttBd1</strain>
    </source>
</reference>
<accession>A1ASB3</accession>